<comment type="function">
    <text evidence="2">Component of the polyhedra envelope. Plays an essential role in the budded virus production.</text>
</comment>
<comment type="subcellular location">
    <subcellularLocation>
        <location evidence="3 4">Virion membrane</location>
    </subcellularLocation>
    <text evidence="3 4">Present in both the budded virus (BV) and the occluded virus (OV). The occluded form allows the virus to be transmitted from insect to insect through ingestion of contaminated food while the budded form is responsible for the dissemination of infection throughout the insect host.</text>
</comment>
<comment type="miscellaneous">
    <text>Initially termed ODV-18 since it was found only in occluded viruses. New approaches also found the protein in budded virus. It has therefore been renamed to E18.</text>
</comment>
<reference key="1">
    <citation type="journal article" date="1994" name="Virology">
        <title>The complete DNA sequence of Autographa californica nuclear polyhedrosis virus.</title>
        <authorList>
            <person name="Ayres M.D."/>
            <person name="Howard S.C."/>
            <person name="Kuzio J."/>
            <person name="Lopez-Ferber M."/>
            <person name="Possee R.D."/>
        </authorList>
    </citation>
    <scope>NUCLEOTIDE SEQUENCE [LARGE SCALE GENOMIC DNA]</scope>
    <source>
        <strain>C6</strain>
    </source>
</reference>
<reference key="2">
    <citation type="journal article" date="1996" name="Virology">
        <title>Transcription, translation, and cellular localization of three Autographa californica nuclear polyhedrosis virus structural proteins: ODV-E18, ODV-E35, and ODV-EC27.</title>
        <authorList>
            <person name="Braunagel S.C."/>
            <person name="He H."/>
            <person name="Ramamurthy P."/>
            <person name="Summers M.D."/>
        </authorList>
    </citation>
    <scope>SUBCELLULAR LOCATION</scope>
</reference>
<reference key="3">
    <citation type="journal article" date="2008" name="Virology">
        <title>AcMNPV ac143 (odv-e18) is essential for mediating budded virus production and is the 30th baculovirus core gene.</title>
        <authorList>
            <person name="McCarthy C.B."/>
            <person name="Theilmann D.A."/>
        </authorList>
    </citation>
    <scope>FUNCTION</scope>
</reference>
<reference key="4">
    <citation type="journal article" date="2010" name="J. Virol.">
        <title>Proteomics of the Autographa californica nucleopolyhedrovirus budded virions.</title>
        <authorList>
            <person name="Wang R."/>
            <person name="Deng F."/>
            <person name="Hou D."/>
            <person name="Zhao Y."/>
            <person name="Guo L."/>
            <person name="Wang H."/>
            <person name="Hu Z."/>
        </authorList>
    </citation>
    <scope>SUBCELLULAR LOCATION</scope>
</reference>
<accession>P41701</accession>
<feature type="chain" id="PRO_0000132919" description="Protein E18">
    <location>
        <begin position="1"/>
        <end position="90"/>
    </location>
</feature>
<feature type="transmembrane region" description="Helical" evidence="1">
    <location>
        <begin position="27"/>
        <end position="47"/>
    </location>
</feature>
<protein>
    <recommendedName>
        <fullName>Protein E18</fullName>
        <shortName>E18</shortName>
    </recommendedName>
</protein>
<name>E18_NPVAC</name>
<sequence length="90" mass="9558">MIYTDPTTGATTSTDAPSTNYLNRLTPNMFLTILAVVVIIALIIIFVQSSSNGNSSGGNVPPNALGGFVNPLNATMRANPFMNTPQRQML</sequence>
<organism>
    <name type="scientific">Autographa californica nuclear polyhedrosis virus</name>
    <name type="common">AcMNPV</name>
    <dbReference type="NCBI Taxonomy" id="46015"/>
    <lineage>
        <taxon>Viruses</taxon>
        <taxon>Viruses incertae sedis</taxon>
        <taxon>Naldaviricetes</taxon>
        <taxon>Lefavirales</taxon>
        <taxon>Baculoviridae</taxon>
        <taxon>Alphabaculovirus</taxon>
        <taxon>Alphabaculovirus aucalifornicae</taxon>
    </lineage>
</organism>
<gene>
    <name type="primary">E18</name>
</gene>
<organismHost>
    <name type="scientific">Lepidoptera</name>
    <name type="common">butterflies and moths</name>
    <dbReference type="NCBI Taxonomy" id="7088"/>
</organismHost>
<dbReference type="EMBL" id="L22858">
    <property type="protein sequence ID" value="AAA66773.1"/>
    <property type="molecule type" value="Genomic_DNA"/>
</dbReference>
<dbReference type="PIR" id="A72868">
    <property type="entry name" value="A72868"/>
</dbReference>
<dbReference type="SMR" id="P41701"/>
<dbReference type="KEGG" id="vg:1403976"/>
<dbReference type="OrthoDB" id="27878at10239"/>
<dbReference type="Proteomes" id="UP000008292">
    <property type="component" value="Segment"/>
</dbReference>
<dbReference type="GO" id="GO:0016020">
    <property type="term" value="C:membrane"/>
    <property type="evidence" value="ECO:0007669"/>
    <property type="project" value="UniProtKB-KW"/>
</dbReference>
<dbReference type="GO" id="GO:0019031">
    <property type="term" value="C:viral envelope"/>
    <property type="evidence" value="ECO:0007669"/>
    <property type="project" value="UniProtKB-KW"/>
</dbReference>
<dbReference type="GO" id="GO:0055036">
    <property type="term" value="C:virion membrane"/>
    <property type="evidence" value="ECO:0007669"/>
    <property type="project" value="UniProtKB-SubCell"/>
</dbReference>
<dbReference type="InterPro" id="IPR019655">
    <property type="entry name" value="Baculo_ODV-E18"/>
</dbReference>
<dbReference type="Pfam" id="PF10717">
    <property type="entry name" value="ODV-E18"/>
    <property type="match status" value="1"/>
</dbReference>
<evidence type="ECO:0000255" key="1"/>
<evidence type="ECO:0000269" key="2">
    <source>
    </source>
</evidence>
<evidence type="ECO:0000269" key="3">
    <source>
    </source>
</evidence>
<evidence type="ECO:0000269" key="4">
    <source>
    </source>
</evidence>
<keyword id="KW-0472">Membrane</keyword>
<keyword id="KW-1185">Reference proteome</keyword>
<keyword id="KW-0812">Transmembrane</keyword>
<keyword id="KW-1133">Transmembrane helix</keyword>
<keyword id="KW-0261">Viral envelope protein</keyword>
<keyword id="KW-0946">Virion</keyword>
<proteinExistence type="predicted"/>